<accession>Q9ZI47</accession>
<feature type="chain" id="PRO_0000129523" description="Large ribosomal subunit protein uL2">
    <location>
        <begin position="1"/>
        <end position="295"/>
    </location>
</feature>
<feature type="region of interest" description="Disordered" evidence="2">
    <location>
        <begin position="243"/>
        <end position="295"/>
    </location>
</feature>
<feature type="compositionally biased region" description="Basic and acidic residues" evidence="2">
    <location>
        <begin position="256"/>
        <end position="287"/>
    </location>
</feature>
<name>RL2_AQUPY</name>
<evidence type="ECO:0000255" key="1">
    <source>
        <dbReference type="HAMAP-Rule" id="MF_01320"/>
    </source>
</evidence>
<evidence type="ECO:0000256" key="2">
    <source>
        <dbReference type="SAM" id="MobiDB-lite"/>
    </source>
</evidence>
<evidence type="ECO:0000305" key="3"/>
<organism>
    <name type="scientific">Aquifex pyrophilus</name>
    <dbReference type="NCBI Taxonomy" id="2714"/>
    <lineage>
        <taxon>Bacteria</taxon>
        <taxon>Pseudomonadati</taxon>
        <taxon>Aquificota</taxon>
        <taxon>Aquificia</taxon>
        <taxon>Aquificales</taxon>
        <taxon>Aquificaceae</taxon>
        <taxon>Aquifex</taxon>
    </lineage>
</organism>
<keyword id="KW-0687">Ribonucleoprotein</keyword>
<keyword id="KW-0689">Ribosomal protein</keyword>
<keyword id="KW-0694">RNA-binding</keyword>
<keyword id="KW-0699">rRNA-binding</keyword>
<reference key="1">
    <citation type="journal article" date="2000" name="J. Mol. Evol.">
        <title>Phylogenetic depth of the bacterial genera Aquifex and Thermotoga inferred from analysis of ribosomal protein, elongation factor, and RNA polymerase subunit sequences.</title>
        <authorList>
            <person name="Bocchetta M."/>
            <person name="Gribaldo S."/>
            <person name="Sanangelantoni A.M."/>
            <person name="Cammarano P."/>
        </authorList>
    </citation>
    <scope>NUCLEOTIDE SEQUENCE [GENOMIC DNA]</scope>
    <source>
        <strain>DSM 6858 / JCM 9492 / Kol5A</strain>
    </source>
</reference>
<protein>
    <recommendedName>
        <fullName evidence="1">Large ribosomal subunit protein uL2</fullName>
    </recommendedName>
    <alternativeName>
        <fullName evidence="3">50S ribosomal protein L2</fullName>
    </alternativeName>
</protein>
<comment type="function">
    <text evidence="1">One of the primary rRNA binding proteins. Required for association of the 30S and 50S subunits to form the 70S ribosome, for tRNA binding and peptide bond formation. It has been suggested to have peptidyltransferase activity; this is somewhat controversial. Makes several contacts with the 16S rRNA in the 70S ribosome.</text>
</comment>
<comment type="subunit">
    <text evidence="1">Part of the 50S ribosomal subunit. Forms a bridge to the 30S subunit in the 70S ribosome.</text>
</comment>
<comment type="similarity">
    <text evidence="1">Belongs to the universal ribosomal protein uL2 family.</text>
</comment>
<dbReference type="EMBL" id="AF040100">
    <property type="protein sequence ID" value="AAD08788.1"/>
    <property type="molecule type" value="Genomic_DNA"/>
</dbReference>
<dbReference type="SMR" id="Q9ZI47"/>
<dbReference type="GO" id="GO:0015934">
    <property type="term" value="C:large ribosomal subunit"/>
    <property type="evidence" value="ECO:0007669"/>
    <property type="project" value="InterPro"/>
</dbReference>
<dbReference type="GO" id="GO:0019843">
    <property type="term" value="F:rRNA binding"/>
    <property type="evidence" value="ECO:0007669"/>
    <property type="project" value="UniProtKB-UniRule"/>
</dbReference>
<dbReference type="GO" id="GO:0003735">
    <property type="term" value="F:structural constituent of ribosome"/>
    <property type="evidence" value="ECO:0007669"/>
    <property type="project" value="InterPro"/>
</dbReference>
<dbReference type="GO" id="GO:0016740">
    <property type="term" value="F:transferase activity"/>
    <property type="evidence" value="ECO:0007669"/>
    <property type="project" value="InterPro"/>
</dbReference>
<dbReference type="GO" id="GO:0002181">
    <property type="term" value="P:cytoplasmic translation"/>
    <property type="evidence" value="ECO:0007669"/>
    <property type="project" value="TreeGrafter"/>
</dbReference>
<dbReference type="FunFam" id="2.30.30.30:FF:000001">
    <property type="entry name" value="50S ribosomal protein L2"/>
    <property type="match status" value="1"/>
</dbReference>
<dbReference type="FunFam" id="2.40.50.140:FF:000003">
    <property type="entry name" value="50S ribosomal protein L2"/>
    <property type="match status" value="1"/>
</dbReference>
<dbReference type="Gene3D" id="2.30.30.30">
    <property type="match status" value="1"/>
</dbReference>
<dbReference type="Gene3D" id="2.40.50.140">
    <property type="entry name" value="Nucleic acid-binding proteins"/>
    <property type="match status" value="1"/>
</dbReference>
<dbReference type="Gene3D" id="4.10.950.10">
    <property type="entry name" value="Ribosomal protein L2, domain 3"/>
    <property type="match status" value="1"/>
</dbReference>
<dbReference type="HAMAP" id="MF_01320_B">
    <property type="entry name" value="Ribosomal_uL2_B"/>
    <property type="match status" value="1"/>
</dbReference>
<dbReference type="InterPro" id="IPR012340">
    <property type="entry name" value="NA-bd_OB-fold"/>
</dbReference>
<dbReference type="InterPro" id="IPR014722">
    <property type="entry name" value="Rib_uL2_dom2"/>
</dbReference>
<dbReference type="InterPro" id="IPR002171">
    <property type="entry name" value="Ribosomal_uL2"/>
</dbReference>
<dbReference type="InterPro" id="IPR005880">
    <property type="entry name" value="Ribosomal_uL2_bac/org-type"/>
</dbReference>
<dbReference type="InterPro" id="IPR022669">
    <property type="entry name" value="Ribosomal_uL2_C"/>
</dbReference>
<dbReference type="InterPro" id="IPR022671">
    <property type="entry name" value="Ribosomal_uL2_CS"/>
</dbReference>
<dbReference type="InterPro" id="IPR014726">
    <property type="entry name" value="Ribosomal_uL2_dom3"/>
</dbReference>
<dbReference type="InterPro" id="IPR022666">
    <property type="entry name" value="Ribosomal_uL2_RNA-bd_dom"/>
</dbReference>
<dbReference type="InterPro" id="IPR008991">
    <property type="entry name" value="Translation_prot_SH3-like_sf"/>
</dbReference>
<dbReference type="NCBIfam" id="TIGR01171">
    <property type="entry name" value="rplB_bact"/>
    <property type="match status" value="1"/>
</dbReference>
<dbReference type="PANTHER" id="PTHR13691:SF5">
    <property type="entry name" value="LARGE RIBOSOMAL SUBUNIT PROTEIN UL2M"/>
    <property type="match status" value="1"/>
</dbReference>
<dbReference type="PANTHER" id="PTHR13691">
    <property type="entry name" value="RIBOSOMAL PROTEIN L2"/>
    <property type="match status" value="1"/>
</dbReference>
<dbReference type="Pfam" id="PF00181">
    <property type="entry name" value="Ribosomal_L2"/>
    <property type="match status" value="1"/>
</dbReference>
<dbReference type="Pfam" id="PF03947">
    <property type="entry name" value="Ribosomal_L2_C"/>
    <property type="match status" value="1"/>
</dbReference>
<dbReference type="PIRSF" id="PIRSF002158">
    <property type="entry name" value="Ribosomal_L2"/>
    <property type="match status" value="1"/>
</dbReference>
<dbReference type="SMART" id="SM01383">
    <property type="entry name" value="Ribosomal_L2"/>
    <property type="match status" value="1"/>
</dbReference>
<dbReference type="SMART" id="SM01382">
    <property type="entry name" value="Ribosomal_L2_C"/>
    <property type="match status" value="1"/>
</dbReference>
<dbReference type="SUPFAM" id="SSF50249">
    <property type="entry name" value="Nucleic acid-binding proteins"/>
    <property type="match status" value="1"/>
</dbReference>
<dbReference type="SUPFAM" id="SSF50104">
    <property type="entry name" value="Translation proteins SH3-like domain"/>
    <property type="match status" value="1"/>
</dbReference>
<dbReference type="PROSITE" id="PS00467">
    <property type="entry name" value="RIBOSOMAL_L2"/>
    <property type="match status" value="1"/>
</dbReference>
<proteinExistence type="inferred from homology"/>
<gene>
    <name evidence="1" type="primary">rplB</name>
    <name evidence="1" type="synonym">rpl2</name>
</gene>
<sequence length="295" mass="33313">MGVRKLKPVTNGTRHAVLYDFEEIEKLVRKGKELVLVKKNKVEPEKSLLKWWHRAKGRSRQRGNITARHRGGGHKKLYRIIDFERDKSLVPAKVVSIEYDPFRSARICLLHYADGEKRYIIWPEGLKVGDTVMSISWEDAEAGKPLPEIKPGNAMPLKYIPEGTIIHNIEFMPGKGGQIARAAGTWAQVLGRSTKKGYVLVRMPSGEVRMIHERCMATIGRVGLAEHELVNVGKAGRARWLGWRPHTRGTAMNPVDHPHGGGEGRTRGKHPESPWDGRRRDTRREGVRSTPISLS</sequence>